<organism>
    <name type="scientific">Brucella canis (strain ATCC 23365 / NCTC 10854 / RM-666)</name>
    <dbReference type="NCBI Taxonomy" id="483179"/>
    <lineage>
        <taxon>Bacteria</taxon>
        <taxon>Pseudomonadati</taxon>
        <taxon>Pseudomonadota</taxon>
        <taxon>Alphaproteobacteria</taxon>
        <taxon>Hyphomicrobiales</taxon>
        <taxon>Brucellaceae</taxon>
        <taxon>Brucella/Ochrobactrum group</taxon>
        <taxon>Brucella</taxon>
    </lineage>
</organism>
<accession>A9M8X7</accession>
<keyword id="KW-1185">Reference proteome</keyword>
<keyword id="KW-0687">Ribonucleoprotein</keyword>
<keyword id="KW-0689">Ribosomal protein</keyword>
<keyword id="KW-0694">RNA-binding</keyword>
<keyword id="KW-0699">rRNA-binding</keyword>
<name>RS18_BRUC2</name>
<evidence type="ECO:0000255" key="1">
    <source>
        <dbReference type="HAMAP-Rule" id="MF_00270"/>
    </source>
</evidence>
<evidence type="ECO:0000256" key="2">
    <source>
        <dbReference type="SAM" id="MobiDB-lite"/>
    </source>
</evidence>
<evidence type="ECO:0000305" key="3"/>
<comment type="function">
    <text evidence="1">Binds as a heterodimer with protein bS6 to the central domain of the 16S rRNA, where it helps stabilize the platform of the 30S subunit.</text>
</comment>
<comment type="subunit">
    <text evidence="1">Part of the 30S ribosomal subunit. Forms a tight heterodimer with protein bS6.</text>
</comment>
<comment type="similarity">
    <text evidence="1">Belongs to the bacterial ribosomal protein bS18 family.</text>
</comment>
<feature type="chain" id="PRO_1000078691" description="Small ribosomal subunit protein bS18">
    <location>
        <begin position="1"/>
        <end position="82"/>
    </location>
</feature>
<feature type="region of interest" description="Disordered" evidence="2">
    <location>
        <begin position="1"/>
        <end position="20"/>
    </location>
</feature>
<gene>
    <name evidence="1" type="primary">rpsR</name>
    <name type="ordered locus">BCAN_A0459</name>
</gene>
<protein>
    <recommendedName>
        <fullName evidence="1">Small ribosomal subunit protein bS18</fullName>
    </recommendedName>
    <alternativeName>
        <fullName evidence="3">30S ribosomal protein S18</fullName>
    </alternativeName>
</protein>
<sequence length="82" mass="9562">MVDINQIPTRRPFHRRRKTCPFSGANAPKIDYKDVKLLQRYISERGKIVPSRITAVSQKKQRELAKAIKRARFLGLLPYVVK</sequence>
<dbReference type="EMBL" id="CP000872">
    <property type="protein sequence ID" value="ABX61541.1"/>
    <property type="molecule type" value="Genomic_DNA"/>
</dbReference>
<dbReference type="RefSeq" id="WP_002963610.1">
    <property type="nucleotide sequence ID" value="NC_010103.1"/>
</dbReference>
<dbReference type="SMR" id="A9M8X7"/>
<dbReference type="GeneID" id="97914641"/>
<dbReference type="KEGG" id="bcs:BCAN_A0459"/>
<dbReference type="HOGENOM" id="CLU_148710_2_2_5"/>
<dbReference type="Proteomes" id="UP000001385">
    <property type="component" value="Chromosome I"/>
</dbReference>
<dbReference type="GO" id="GO:0022627">
    <property type="term" value="C:cytosolic small ribosomal subunit"/>
    <property type="evidence" value="ECO:0007669"/>
    <property type="project" value="TreeGrafter"/>
</dbReference>
<dbReference type="GO" id="GO:0070181">
    <property type="term" value="F:small ribosomal subunit rRNA binding"/>
    <property type="evidence" value="ECO:0007669"/>
    <property type="project" value="TreeGrafter"/>
</dbReference>
<dbReference type="GO" id="GO:0003735">
    <property type="term" value="F:structural constituent of ribosome"/>
    <property type="evidence" value="ECO:0007669"/>
    <property type="project" value="InterPro"/>
</dbReference>
<dbReference type="GO" id="GO:0006412">
    <property type="term" value="P:translation"/>
    <property type="evidence" value="ECO:0007669"/>
    <property type="project" value="UniProtKB-UniRule"/>
</dbReference>
<dbReference type="Gene3D" id="4.10.640.10">
    <property type="entry name" value="Ribosomal protein S18"/>
    <property type="match status" value="1"/>
</dbReference>
<dbReference type="HAMAP" id="MF_00270">
    <property type="entry name" value="Ribosomal_bS18"/>
    <property type="match status" value="1"/>
</dbReference>
<dbReference type="InterPro" id="IPR001648">
    <property type="entry name" value="Ribosomal_bS18"/>
</dbReference>
<dbReference type="InterPro" id="IPR018275">
    <property type="entry name" value="Ribosomal_bS18_CS"/>
</dbReference>
<dbReference type="InterPro" id="IPR036870">
    <property type="entry name" value="Ribosomal_bS18_sf"/>
</dbReference>
<dbReference type="NCBIfam" id="TIGR00165">
    <property type="entry name" value="S18"/>
    <property type="match status" value="1"/>
</dbReference>
<dbReference type="PANTHER" id="PTHR13479">
    <property type="entry name" value="30S RIBOSOMAL PROTEIN S18"/>
    <property type="match status" value="1"/>
</dbReference>
<dbReference type="PANTHER" id="PTHR13479:SF40">
    <property type="entry name" value="SMALL RIBOSOMAL SUBUNIT PROTEIN BS18M"/>
    <property type="match status" value="1"/>
</dbReference>
<dbReference type="Pfam" id="PF01084">
    <property type="entry name" value="Ribosomal_S18"/>
    <property type="match status" value="1"/>
</dbReference>
<dbReference type="PRINTS" id="PR00974">
    <property type="entry name" value="RIBOSOMALS18"/>
</dbReference>
<dbReference type="SUPFAM" id="SSF46911">
    <property type="entry name" value="Ribosomal protein S18"/>
    <property type="match status" value="1"/>
</dbReference>
<dbReference type="PROSITE" id="PS00057">
    <property type="entry name" value="RIBOSOMAL_S18"/>
    <property type="match status" value="1"/>
</dbReference>
<reference key="1">
    <citation type="submission" date="2007-10" db="EMBL/GenBank/DDBJ databases">
        <title>Brucella canis ATCC 23365 whole genome shotgun sequencing project.</title>
        <authorList>
            <person name="Setubal J.C."/>
            <person name="Bowns C."/>
            <person name="Boyle S."/>
            <person name="Crasta O.R."/>
            <person name="Czar M.J."/>
            <person name="Dharmanolla C."/>
            <person name="Gillespie J.J."/>
            <person name="Kenyon R.W."/>
            <person name="Lu J."/>
            <person name="Mane S."/>
            <person name="Mohapatra S."/>
            <person name="Nagrani S."/>
            <person name="Purkayastha A."/>
            <person name="Rajasimha H.K."/>
            <person name="Shallom J.M."/>
            <person name="Shallom S."/>
            <person name="Shukla M."/>
            <person name="Snyder E.E."/>
            <person name="Sobral B.W."/>
            <person name="Wattam A.R."/>
            <person name="Will R."/>
            <person name="Williams K."/>
            <person name="Yoo H."/>
            <person name="Bruce D."/>
            <person name="Detter C."/>
            <person name="Munk C."/>
            <person name="Brettin T.S."/>
        </authorList>
    </citation>
    <scope>NUCLEOTIDE SEQUENCE [LARGE SCALE GENOMIC DNA]</scope>
    <source>
        <strain>ATCC 23365 / NCTC 10854 / RM-666</strain>
    </source>
</reference>
<proteinExistence type="inferred from homology"/>